<dbReference type="EMBL" id="BA000033">
    <property type="status" value="NOT_ANNOTATED_CDS"/>
    <property type="molecule type" value="Genomic_DNA"/>
</dbReference>
<dbReference type="EMBL" id="BK006301">
    <property type="protein sequence ID" value="DAA06123.1"/>
    <property type="molecule type" value="Genomic_DNA"/>
</dbReference>
<dbReference type="GO" id="GO:0031640">
    <property type="term" value="P:killing of cells of another organism"/>
    <property type="evidence" value="ECO:0007669"/>
    <property type="project" value="UniProtKB-KW"/>
</dbReference>
<dbReference type="InterPro" id="IPR031429">
    <property type="entry name" value="PSM_alpha"/>
</dbReference>
<dbReference type="NCBIfam" id="NF033425">
    <property type="entry name" value="PSM_alpha_1_2"/>
    <property type="match status" value="1"/>
</dbReference>
<dbReference type="Pfam" id="PF17063">
    <property type="entry name" value="PSMalpha"/>
    <property type="match status" value="1"/>
</dbReference>
<feature type="peptide" id="PRO_0000345056" description="Phenol-soluble modulin alpha 2 peptide">
    <location>
        <begin position="1"/>
        <end position="21"/>
    </location>
</feature>
<feature type="modified residue" description="N-formylmethionine" evidence="1">
    <location>
        <position position="1"/>
    </location>
</feature>
<reference key="1">
    <citation type="journal article" date="2002" name="Lancet">
        <title>Genome and virulence determinants of high virulence community-acquired MRSA.</title>
        <authorList>
            <person name="Baba T."/>
            <person name="Takeuchi F."/>
            <person name="Kuroda M."/>
            <person name="Yuzawa H."/>
            <person name="Aoki K."/>
            <person name="Oguchi A."/>
            <person name="Nagai Y."/>
            <person name="Iwama N."/>
            <person name="Asano K."/>
            <person name="Naimi T."/>
            <person name="Kuroda H."/>
            <person name="Cui L."/>
            <person name="Yamamoto K."/>
            <person name="Hiramatsu K."/>
        </authorList>
    </citation>
    <scope>NUCLEOTIDE SEQUENCE [LARGE SCALE GENOMIC DNA]</scope>
    <source>
        <strain>MW2</strain>
    </source>
</reference>
<reference key="2">
    <citation type="journal article" date="2007" name="Nat. Med.">
        <title>Identification of novel cytolytic peptides as key virulence determinants for community-associated MRSA.</title>
        <authorList>
            <person name="Wang R."/>
            <person name="Braughton K.R."/>
            <person name="Kretschmer D."/>
            <person name="Bach T.-H.L."/>
            <person name="Queck S.Y."/>
            <person name="Li M."/>
            <person name="Kennedy A.D."/>
            <person name="Dorward D.W."/>
            <person name="Klebanoff S.J."/>
            <person name="Peschel A."/>
            <person name="DeLeo F.R."/>
            <person name="Otto M."/>
        </authorList>
    </citation>
    <scope>PARTIAL PROTEIN SEQUENCE</scope>
    <scope>FORMYLATION AT MET-1</scope>
    <scope>FUNCTION AS A VIRULENCE FACTOR</scope>
    <scope>IDENTIFICATION BY MASS SPECTROMETRY</scope>
    <scope>INDUCTION BY AGR</scope>
</reference>
<accession>A9JX06</accession>
<name>PSMA2_STAAW</name>
<gene>
    <name type="primary">psmA2</name>
    <name type="ordered locus">MW0406.3</name>
</gene>
<proteinExistence type="evidence at protein level"/>
<keyword id="KW-0204">Cytolysis</keyword>
<keyword id="KW-0903">Direct protein sequencing</keyword>
<keyword id="KW-0291">Formylation</keyword>
<keyword id="KW-0843">Virulence</keyword>
<sequence length="21" mass="2278">MGIIAGIIKFIKGLIEKFTGK</sequence>
<evidence type="ECO:0000269" key="1">
    <source>
    </source>
</evidence>
<evidence type="ECO:0000305" key="2"/>
<protein>
    <recommendedName>
        <fullName>Phenol-soluble modulin alpha 2 peptide</fullName>
    </recommendedName>
</protein>
<organism>
    <name type="scientific">Staphylococcus aureus (strain MW2)</name>
    <dbReference type="NCBI Taxonomy" id="196620"/>
    <lineage>
        <taxon>Bacteria</taxon>
        <taxon>Bacillati</taxon>
        <taxon>Bacillota</taxon>
        <taxon>Bacilli</taxon>
        <taxon>Bacillales</taxon>
        <taxon>Staphylococcaceae</taxon>
        <taxon>Staphylococcus</taxon>
    </lineage>
</organism>
<comment type="function">
    <text evidence="1">Peptide which can recruit, activate and subsequently lyse human neutrophils, thus eliminating the main cellular defense against infection. Stimulates the secretion of the chemotactic factor interleukin-8 (IL-8). The ensuing activation process triggers an inflammatory response in the host, thus contributing greatly to virulence. Also possesses hemolytic activity, which may contribute to the development of disease.</text>
</comment>
<comment type="induction">
    <text evidence="1">Up-regulated by agr.</text>
</comment>
<comment type="miscellaneous">
    <text>Peptide production is higher in most prevalent community-associated MRSA strains than in hospital-associated MRSA strains.</text>
</comment>
<comment type="similarity">
    <text evidence="2">Belongs to the phenol-soluble modulin alpha peptides family.</text>
</comment>